<reference key="1">
    <citation type="journal article" date="2009" name="BMC Genomics">
        <title>Metabolic analysis of the soil microbe Dechloromonas aromatica str. RCB: indications of a surprisingly complex life-style and cryptic anaerobic pathways for aromatic degradation.</title>
        <authorList>
            <person name="Salinero K.K."/>
            <person name="Keller K."/>
            <person name="Feil W.S."/>
            <person name="Feil H."/>
            <person name="Trong S."/>
            <person name="Di Bartolo G."/>
            <person name="Lapidus A."/>
        </authorList>
    </citation>
    <scope>NUCLEOTIDE SEQUENCE [LARGE SCALE GENOMIC DNA]</scope>
    <source>
        <strain>RCB</strain>
    </source>
</reference>
<comment type="function">
    <text evidence="1">Catalyzes the ATP-dependent 2-thiolation of cytidine in position 32 of tRNA, to form 2-thiocytidine (s(2)C32). The sulfur atoms are provided by the cysteine/cysteine desulfurase (IscS) system.</text>
</comment>
<comment type="catalytic activity">
    <reaction evidence="1">
        <text>cytidine(32) in tRNA + S-sulfanyl-L-cysteinyl-[cysteine desulfurase] + AH2 + ATP = 2-thiocytidine(32) in tRNA + L-cysteinyl-[cysteine desulfurase] + A + AMP + diphosphate + H(+)</text>
        <dbReference type="Rhea" id="RHEA:57048"/>
        <dbReference type="Rhea" id="RHEA-COMP:10288"/>
        <dbReference type="Rhea" id="RHEA-COMP:12157"/>
        <dbReference type="Rhea" id="RHEA-COMP:12158"/>
        <dbReference type="Rhea" id="RHEA-COMP:14821"/>
        <dbReference type="ChEBI" id="CHEBI:13193"/>
        <dbReference type="ChEBI" id="CHEBI:15378"/>
        <dbReference type="ChEBI" id="CHEBI:17499"/>
        <dbReference type="ChEBI" id="CHEBI:29950"/>
        <dbReference type="ChEBI" id="CHEBI:30616"/>
        <dbReference type="ChEBI" id="CHEBI:33019"/>
        <dbReference type="ChEBI" id="CHEBI:61963"/>
        <dbReference type="ChEBI" id="CHEBI:82748"/>
        <dbReference type="ChEBI" id="CHEBI:141453"/>
        <dbReference type="ChEBI" id="CHEBI:456215"/>
    </reaction>
    <physiologicalReaction direction="left-to-right" evidence="1">
        <dbReference type="Rhea" id="RHEA:57049"/>
    </physiologicalReaction>
</comment>
<comment type="cofactor">
    <cofactor evidence="1">
        <name>Mg(2+)</name>
        <dbReference type="ChEBI" id="CHEBI:18420"/>
    </cofactor>
</comment>
<comment type="cofactor">
    <cofactor evidence="1">
        <name>[4Fe-4S] cluster</name>
        <dbReference type="ChEBI" id="CHEBI:49883"/>
    </cofactor>
    <text evidence="1">Binds 1 [4Fe-4S] cluster per subunit. The cluster is chelated by three Cys residues, the fourth Fe has a free coordination site that may bind a sulfur atom transferred from the persulfide of IscS.</text>
</comment>
<comment type="pathway">
    <text evidence="1">tRNA modification.</text>
</comment>
<comment type="subunit">
    <text evidence="1">Homodimer.</text>
</comment>
<comment type="subcellular location">
    <subcellularLocation>
        <location evidence="1">Cytoplasm</location>
    </subcellularLocation>
</comment>
<comment type="miscellaneous">
    <text evidence="1">The thiolation reaction likely consists of two steps: a first activation step by ATP to form an adenylated intermediate of the target base of tRNA, and a second nucleophilic substitution step of the sulfur (S) atom supplied by the hydrosulfide attached to the Fe-S cluster.</text>
</comment>
<comment type="similarity">
    <text evidence="1">Belongs to the TtcA family.</text>
</comment>
<dbReference type="EC" id="2.8.1.-" evidence="1"/>
<dbReference type="EMBL" id="CP000089">
    <property type="protein sequence ID" value="AAZ48869.1"/>
    <property type="molecule type" value="Genomic_DNA"/>
</dbReference>
<dbReference type="SMR" id="Q477W2"/>
<dbReference type="STRING" id="159087.Daro_4143"/>
<dbReference type="KEGG" id="dar:Daro_4143"/>
<dbReference type="eggNOG" id="COG0037">
    <property type="taxonomic scope" value="Bacteria"/>
</dbReference>
<dbReference type="HOGENOM" id="CLU_026481_0_0_4"/>
<dbReference type="OrthoDB" id="9801054at2"/>
<dbReference type="GO" id="GO:0005737">
    <property type="term" value="C:cytoplasm"/>
    <property type="evidence" value="ECO:0007669"/>
    <property type="project" value="UniProtKB-SubCell"/>
</dbReference>
<dbReference type="GO" id="GO:0051539">
    <property type="term" value="F:4 iron, 4 sulfur cluster binding"/>
    <property type="evidence" value="ECO:0007669"/>
    <property type="project" value="UniProtKB-UniRule"/>
</dbReference>
<dbReference type="GO" id="GO:0005524">
    <property type="term" value="F:ATP binding"/>
    <property type="evidence" value="ECO:0007669"/>
    <property type="project" value="UniProtKB-UniRule"/>
</dbReference>
<dbReference type="GO" id="GO:0000287">
    <property type="term" value="F:magnesium ion binding"/>
    <property type="evidence" value="ECO:0007669"/>
    <property type="project" value="UniProtKB-UniRule"/>
</dbReference>
<dbReference type="GO" id="GO:0016783">
    <property type="term" value="F:sulfurtransferase activity"/>
    <property type="evidence" value="ECO:0007669"/>
    <property type="project" value="UniProtKB-UniRule"/>
</dbReference>
<dbReference type="GO" id="GO:0000049">
    <property type="term" value="F:tRNA binding"/>
    <property type="evidence" value="ECO:0007669"/>
    <property type="project" value="UniProtKB-KW"/>
</dbReference>
<dbReference type="GO" id="GO:0034227">
    <property type="term" value="P:tRNA thio-modification"/>
    <property type="evidence" value="ECO:0007669"/>
    <property type="project" value="UniProtKB-UniRule"/>
</dbReference>
<dbReference type="CDD" id="cd24138">
    <property type="entry name" value="TtcA-like"/>
    <property type="match status" value="1"/>
</dbReference>
<dbReference type="Gene3D" id="3.40.50.620">
    <property type="entry name" value="HUPs"/>
    <property type="match status" value="1"/>
</dbReference>
<dbReference type="HAMAP" id="MF_01850">
    <property type="entry name" value="TtcA"/>
    <property type="match status" value="1"/>
</dbReference>
<dbReference type="InterPro" id="IPR014729">
    <property type="entry name" value="Rossmann-like_a/b/a_fold"/>
</dbReference>
<dbReference type="InterPro" id="IPR011063">
    <property type="entry name" value="TilS/TtcA_N"/>
</dbReference>
<dbReference type="InterPro" id="IPR012089">
    <property type="entry name" value="tRNA_Cyd_32_2_STrfase"/>
</dbReference>
<dbReference type="InterPro" id="IPR035107">
    <property type="entry name" value="tRNA_thiolation_TtcA_Ctu1"/>
</dbReference>
<dbReference type="NCBIfam" id="NF007972">
    <property type="entry name" value="PRK10696.1"/>
    <property type="match status" value="1"/>
</dbReference>
<dbReference type="PANTHER" id="PTHR43686:SF1">
    <property type="entry name" value="AMINOTRAN_5 DOMAIN-CONTAINING PROTEIN"/>
    <property type="match status" value="1"/>
</dbReference>
<dbReference type="PANTHER" id="PTHR43686">
    <property type="entry name" value="SULFURTRANSFERASE-RELATED"/>
    <property type="match status" value="1"/>
</dbReference>
<dbReference type="Pfam" id="PF01171">
    <property type="entry name" value="ATP_bind_3"/>
    <property type="match status" value="1"/>
</dbReference>
<dbReference type="PIRSF" id="PIRSF004976">
    <property type="entry name" value="ATPase_YdaO"/>
    <property type="match status" value="1"/>
</dbReference>
<dbReference type="SUPFAM" id="SSF52402">
    <property type="entry name" value="Adenine nucleotide alpha hydrolases-like"/>
    <property type="match status" value="1"/>
</dbReference>
<accession>Q477W2</accession>
<organism>
    <name type="scientific">Dechloromonas aromatica (strain RCB)</name>
    <dbReference type="NCBI Taxonomy" id="159087"/>
    <lineage>
        <taxon>Bacteria</taxon>
        <taxon>Pseudomonadati</taxon>
        <taxon>Pseudomonadota</taxon>
        <taxon>Betaproteobacteria</taxon>
        <taxon>Rhodocyclales</taxon>
        <taxon>Azonexaceae</taxon>
        <taxon>Dechloromonas</taxon>
    </lineage>
</organism>
<name>TTCA_DECAR</name>
<gene>
    <name evidence="1" type="primary">ttcA</name>
    <name type="ordered locus">Daro_4143</name>
</gene>
<evidence type="ECO:0000255" key="1">
    <source>
        <dbReference type="HAMAP-Rule" id="MF_01850"/>
    </source>
</evidence>
<proteinExistence type="inferred from homology"/>
<protein>
    <recommendedName>
        <fullName evidence="1">tRNA-cytidine(32) 2-sulfurtransferase</fullName>
        <ecNumber evidence="1">2.8.1.-</ecNumber>
    </recommendedName>
    <alternativeName>
        <fullName evidence="1">Two-thiocytidine biosynthesis protein A</fullName>
    </alternativeName>
    <alternativeName>
        <fullName evidence="1">tRNA 2-thiocytidine biosynthesis protein TtcA</fullName>
    </alternativeName>
</protein>
<sequence length="287" mass="32176">MTPSNTLQKLRKYLEGRTGKAIIDYNMIEDGDTVLVCVSGGKDSYTLLAMLMALQQRAPVKFRLIAMNLDQKQPGFPADILPRYFESIGIEYRIVEADTYSVVKEKIPEGKTTCSLCSRLRRGIIYRTAKELGANKIALGHHRDDMVHTLFLNLLFGGKLKAMPPKLVTDDKSHVVIRPLAYCAEADIAKFARGMEFPIIPCNLCGSQDNLQRQKIREMMQEWDKRYPGRTESVFTAMQNVVPSHLADADLFDFRGLTLDTPVDEGDIAFDAPEMPISGMIPISQTA</sequence>
<feature type="chain" id="PRO_0000348708" description="tRNA-cytidine(32) 2-sulfurtransferase">
    <location>
        <begin position="1"/>
        <end position="287"/>
    </location>
</feature>
<feature type="short sequence motif" description="PP-loop motif" evidence="1">
    <location>
        <begin position="39"/>
        <end position="44"/>
    </location>
</feature>
<feature type="binding site" evidence="1">
    <location>
        <position position="114"/>
    </location>
    <ligand>
        <name>[4Fe-4S] cluster</name>
        <dbReference type="ChEBI" id="CHEBI:49883"/>
    </ligand>
</feature>
<feature type="binding site" evidence="1">
    <location>
        <position position="117"/>
    </location>
    <ligand>
        <name>[4Fe-4S] cluster</name>
        <dbReference type="ChEBI" id="CHEBI:49883"/>
    </ligand>
</feature>
<feature type="binding site" evidence="1">
    <location>
        <position position="205"/>
    </location>
    <ligand>
        <name>[4Fe-4S] cluster</name>
        <dbReference type="ChEBI" id="CHEBI:49883"/>
    </ligand>
</feature>
<keyword id="KW-0004">4Fe-4S</keyword>
<keyword id="KW-0067">ATP-binding</keyword>
<keyword id="KW-0963">Cytoplasm</keyword>
<keyword id="KW-0408">Iron</keyword>
<keyword id="KW-0411">Iron-sulfur</keyword>
<keyword id="KW-0460">Magnesium</keyword>
<keyword id="KW-0479">Metal-binding</keyword>
<keyword id="KW-0547">Nucleotide-binding</keyword>
<keyword id="KW-0694">RNA-binding</keyword>
<keyword id="KW-0808">Transferase</keyword>
<keyword id="KW-0819">tRNA processing</keyword>
<keyword id="KW-0820">tRNA-binding</keyword>